<dbReference type="EC" id="2.2.1.7" evidence="1"/>
<dbReference type="EMBL" id="AE009951">
    <property type="protein sequence ID" value="AAL95404.1"/>
    <property type="molecule type" value="Genomic_DNA"/>
</dbReference>
<dbReference type="RefSeq" id="NP_604105.1">
    <property type="nucleotide sequence ID" value="NC_003454.1"/>
</dbReference>
<dbReference type="RefSeq" id="WP_005903179.1">
    <property type="nucleotide sequence ID" value="NZ_OZ209243.1"/>
</dbReference>
<dbReference type="SMR" id="Q8R639"/>
<dbReference type="FunCoup" id="Q8R639">
    <property type="interactions" value="301"/>
</dbReference>
<dbReference type="STRING" id="190304.FN1208"/>
<dbReference type="PaxDb" id="190304-FN1208"/>
<dbReference type="EnsemblBacteria" id="AAL95404">
    <property type="protein sequence ID" value="AAL95404"/>
    <property type="gene ID" value="FN1208"/>
</dbReference>
<dbReference type="GeneID" id="79784185"/>
<dbReference type="KEGG" id="fnu:FN1208"/>
<dbReference type="PATRIC" id="fig|190304.8.peg.1771"/>
<dbReference type="eggNOG" id="COG1154">
    <property type="taxonomic scope" value="Bacteria"/>
</dbReference>
<dbReference type="HOGENOM" id="CLU_009227_1_4_0"/>
<dbReference type="InParanoid" id="Q8R639"/>
<dbReference type="BioCyc" id="FNUC190304:G1FZS-1785-MONOMER"/>
<dbReference type="UniPathway" id="UPA00064">
    <property type="reaction ID" value="UER00091"/>
</dbReference>
<dbReference type="Proteomes" id="UP000002521">
    <property type="component" value="Chromosome"/>
</dbReference>
<dbReference type="GO" id="GO:0005829">
    <property type="term" value="C:cytosol"/>
    <property type="evidence" value="ECO:0000318"/>
    <property type="project" value="GO_Central"/>
</dbReference>
<dbReference type="GO" id="GO:0008661">
    <property type="term" value="F:1-deoxy-D-xylulose-5-phosphate synthase activity"/>
    <property type="evidence" value="ECO:0000318"/>
    <property type="project" value="GO_Central"/>
</dbReference>
<dbReference type="GO" id="GO:0000287">
    <property type="term" value="F:magnesium ion binding"/>
    <property type="evidence" value="ECO:0007669"/>
    <property type="project" value="UniProtKB-UniRule"/>
</dbReference>
<dbReference type="GO" id="GO:0030976">
    <property type="term" value="F:thiamine pyrophosphate binding"/>
    <property type="evidence" value="ECO:0007669"/>
    <property type="project" value="UniProtKB-UniRule"/>
</dbReference>
<dbReference type="GO" id="GO:0052865">
    <property type="term" value="P:1-deoxy-D-xylulose 5-phosphate biosynthetic process"/>
    <property type="evidence" value="ECO:0007669"/>
    <property type="project" value="UniProtKB-UniPathway"/>
</dbReference>
<dbReference type="GO" id="GO:0019288">
    <property type="term" value="P:isopentenyl diphosphate biosynthetic process, methylerythritol 4-phosphate pathway"/>
    <property type="evidence" value="ECO:0000318"/>
    <property type="project" value="GO_Central"/>
</dbReference>
<dbReference type="GO" id="GO:0016114">
    <property type="term" value="P:terpenoid biosynthetic process"/>
    <property type="evidence" value="ECO:0007669"/>
    <property type="project" value="UniProtKB-UniRule"/>
</dbReference>
<dbReference type="GO" id="GO:0009228">
    <property type="term" value="P:thiamine biosynthetic process"/>
    <property type="evidence" value="ECO:0007669"/>
    <property type="project" value="UniProtKB-UniRule"/>
</dbReference>
<dbReference type="CDD" id="cd02007">
    <property type="entry name" value="TPP_DXS"/>
    <property type="match status" value="1"/>
</dbReference>
<dbReference type="CDD" id="cd07033">
    <property type="entry name" value="TPP_PYR_DXS_TK_like"/>
    <property type="match status" value="1"/>
</dbReference>
<dbReference type="Gene3D" id="3.40.50.920">
    <property type="match status" value="1"/>
</dbReference>
<dbReference type="Gene3D" id="3.40.50.970">
    <property type="match status" value="2"/>
</dbReference>
<dbReference type="HAMAP" id="MF_00315">
    <property type="entry name" value="DXP_synth"/>
    <property type="match status" value="1"/>
</dbReference>
<dbReference type="InterPro" id="IPR005477">
    <property type="entry name" value="Dxylulose-5-P_synthase"/>
</dbReference>
<dbReference type="InterPro" id="IPR029061">
    <property type="entry name" value="THDP-binding"/>
</dbReference>
<dbReference type="InterPro" id="IPR000399">
    <property type="entry name" value="TPP-bd_CS"/>
</dbReference>
<dbReference type="InterPro" id="IPR009014">
    <property type="entry name" value="Transketo_C/PFOR_II"/>
</dbReference>
<dbReference type="InterPro" id="IPR005475">
    <property type="entry name" value="Transketolase-like_Pyr-bd"/>
</dbReference>
<dbReference type="InterPro" id="IPR033248">
    <property type="entry name" value="Transketolase_C"/>
</dbReference>
<dbReference type="InterPro" id="IPR049557">
    <property type="entry name" value="Transketolase_CS"/>
</dbReference>
<dbReference type="NCBIfam" id="TIGR00204">
    <property type="entry name" value="dxs"/>
    <property type="match status" value="1"/>
</dbReference>
<dbReference type="NCBIfam" id="NF003933">
    <property type="entry name" value="PRK05444.2-2"/>
    <property type="match status" value="1"/>
</dbReference>
<dbReference type="PANTHER" id="PTHR43322">
    <property type="entry name" value="1-D-DEOXYXYLULOSE 5-PHOSPHATE SYNTHASE-RELATED"/>
    <property type="match status" value="1"/>
</dbReference>
<dbReference type="PANTHER" id="PTHR43322:SF5">
    <property type="entry name" value="1-DEOXY-D-XYLULOSE-5-PHOSPHATE SYNTHASE, CHLOROPLASTIC"/>
    <property type="match status" value="1"/>
</dbReference>
<dbReference type="Pfam" id="PF13292">
    <property type="entry name" value="DXP_synthase_N"/>
    <property type="match status" value="1"/>
</dbReference>
<dbReference type="Pfam" id="PF02779">
    <property type="entry name" value="Transket_pyr"/>
    <property type="match status" value="1"/>
</dbReference>
<dbReference type="Pfam" id="PF02780">
    <property type="entry name" value="Transketolase_C"/>
    <property type="match status" value="1"/>
</dbReference>
<dbReference type="SMART" id="SM00861">
    <property type="entry name" value="Transket_pyr"/>
    <property type="match status" value="1"/>
</dbReference>
<dbReference type="SUPFAM" id="SSF52518">
    <property type="entry name" value="Thiamin diphosphate-binding fold (THDP-binding)"/>
    <property type="match status" value="2"/>
</dbReference>
<dbReference type="SUPFAM" id="SSF52922">
    <property type="entry name" value="TK C-terminal domain-like"/>
    <property type="match status" value="1"/>
</dbReference>
<dbReference type="PROSITE" id="PS00801">
    <property type="entry name" value="TRANSKETOLASE_1"/>
    <property type="match status" value="1"/>
</dbReference>
<protein>
    <recommendedName>
        <fullName evidence="1">1-deoxy-D-xylulose-5-phosphate synthase</fullName>
        <ecNumber evidence="1">2.2.1.7</ecNumber>
    </recommendedName>
    <alternativeName>
        <fullName evidence="1">1-deoxyxylulose-5-phosphate synthase</fullName>
        <shortName evidence="1">DXP synthase</shortName>
        <shortName evidence="1">DXPS</shortName>
    </alternativeName>
</protein>
<sequence length="600" mass="67769">MNEELTQRCEEIRKNLIEVVSKNGGHLGSNLGVVELTVCLDEIFDFKEDIVLFDVGHQAYIYKILTDRAERFDSIRTRKGLSPFLDPNESSYDHFISGHAGTALPAAVGFAIANPDKKVIVVVGDASISNGHSLEALNYIGYKKLENILIIVNDNEMSIGENVGFISKFLKKVISSGKYQNFREDVKSFINRIKADRVKRTLERLERSIKGYVTPFYALESLGFRFFNVFEGNNIEKLLPMLKKIKDLKGPTILLVKTEKGKGYCFAEEDKEKFHGIAPFNIETGNTYKSLVSYSEVFGNKILELGKEDENIYTLSAAMIKGTGLHKFSEEFPERCIDTGIAEGFTVTLAAGLAKSGKKPYVCIYSTFIQRAISQLIHDVSIQNLPVRFIIDRSGIVGEDGKTHNGIYDLSFFLSIQNFTVLCPTTAKELGQALEISKNFNLGPLVIRIPRDSIFDIENEEPLEIGRWKVIKKGSKNLFIATGTMLKIILEIYDKLQNRGIYCTIISAASVKPLDENYLLNYIKEYDNIFVLEENYVKNSFGTAILEFFNDNGIQKPLHRIALKSAIIPHGKREELLKEERLKGESLIERIEELIYGRKK</sequence>
<proteinExistence type="inferred from homology"/>
<gene>
    <name evidence="1" type="primary">dxs</name>
    <name type="ordered locus">FN1208</name>
</gene>
<feature type="chain" id="PRO_0000189114" description="1-deoxy-D-xylulose-5-phosphate synthase">
    <location>
        <begin position="1"/>
        <end position="600"/>
    </location>
</feature>
<feature type="binding site" evidence="1">
    <location>
        <position position="57"/>
    </location>
    <ligand>
        <name>thiamine diphosphate</name>
        <dbReference type="ChEBI" id="CHEBI:58937"/>
    </ligand>
</feature>
<feature type="binding site" evidence="1">
    <location>
        <begin position="98"/>
        <end position="100"/>
    </location>
    <ligand>
        <name>thiamine diphosphate</name>
        <dbReference type="ChEBI" id="CHEBI:58937"/>
    </ligand>
</feature>
<feature type="binding site" evidence="1">
    <location>
        <position position="125"/>
    </location>
    <ligand>
        <name>Mg(2+)</name>
        <dbReference type="ChEBI" id="CHEBI:18420"/>
    </ligand>
</feature>
<feature type="binding site" evidence="1">
    <location>
        <begin position="126"/>
        <end position="127"/>
    </location>
    <ligand>
        <name>thiamine diphosphate</name>
        <dbReference type="ChEBI" id="CHEBI:58937"/>
    </ligand>
</feature>
<feature type="binding site" evidence="1">
    <location>
        <position position="155"/>
    </location>
    <ligand>
        <name>Mg(2+)</name>
        <dbReference type="ChEBI" id="CHEBI:18420"/>
    </ligand>
</feature>
<feature type="binding site" evidence="1">
    <location>
        <position position="155"/>
    </location>
    <ligand>
        <name>thiamine diphosphate</name>
        <dbReference type="ChEBI" id="CHEBI:58937"/>
    </ligand>
</feature>
<feature type="binding site" evidence="1">
    <location>
        <position position="264"/>
    </location>
    <ligand>
        <name>thiamine diphosphate</name>
        <dbReference type="ChEBI" id="CHEBI:58937"/>
    </ligand>
</feature>
<feature type="binding site" evidence="1">
    <location>
        <position position="343"/>
    </location>
    <ligand>
        <name>thiamine diphosphate</name>
        <dbReference type="ChEBI" id="CHEBI:58937"/>
    </ligand>
</feature>
<evidence type="ECO:0000255" key="1">
    <source>
        <dbReference type="HAMAP-Rule" id="MF_00315"/>
    </source>
</evidence>
<reference key="1">
    <citation type="journal article" date="2002" name="J. Bacteriol.">
        <title>Genome sequence and analysis of the oral bacterium Fusobacterium nucleatum strain ATCC 25586.</title>
        <authorList>
            <person name="Kapatral V."/>
            <person name="Anderson I."/>
            <person name="Ivanova N."/>
            <person name="Reznik G."/>
            <person name="Los T."/>
            <person name="Lykidis A."/>
            <person name="Bhattacharyya A."/>
            <person name="Bartman A."/>
            <person name="Gardner W."/>
            <person name="Grechkin G."/>
            <person name="Zhu L."/>
            <person name="Vasieva O."/>
            <person name="Chu L."/>
            <person name="Kogan Y."/>
            <person name="Chaga O."/>
            <person name="Goltsman E."/>
            <person name="Bernal A."/>
            <person name="Larsen N."/>
            <person name="D'Souza M."/>
            <person name="Walunas T."/>
            <person name="Pusch G."/>
            <person name="Haselkorn R."/>
            <person name="Fonstein M."/>
            <person name="Kyrpides N.C."/>
            <person name="Overbeek R."/>
        </authorList>
    </citation>
    <scope>NUCLEOTIDE SEQUENCE [LARGE SCALE GENOMIC DNA]</scope>
    <source>
        <strain>ATCC 25586 / DSM 15643 / BCRC 10681 / CIP 101130 / JCM 8532 / KCTC 2640 / LMG 13131 / VPI 4355</strain>
    </source>
</reference>
<organism>
    <name type="scientific">Fusobacterium nucleatum subsp. nucleatum (strain ATCC 25586 / DSM 15643 / BCRC 10681 / CIP 101130 / JCM 8532 / KCTC 2640 / LMG 13131 / VPI 4355)</name>
    <dbReference type="NCBI Taxonomy" id="190304"/>
    <lineage>
        <taxon>Bacteria</taxon>
        <taxon>Fusobacteriati</taxon>
        <taxon>Fusobacteriota</taxon>
        <taxon>Fusobacteriia</taxon>
        <taxon>Fusobacteriales</taxon>
        <taxon>Fusobacteriaceae</taxon>
        <taxon>Fusobacterium</taxon>
    </lineage>
</organism>
<name>DXS_FUSNN</name>
<comment type="function">
    <text evidence="1">Catalyzes the acyloin condensation reaction between C atoms 2 and 3 of pyruvate and glyceraldehyde 3-phosphate to yield 1-deoxy-D-xylulose-5-phosphate (DXP).</text>
</comment>
<comment type="catalytic activity">
    <reaction evidence="1">
        <text>D-glyceraldehyde 3-phosphate + pyruvate + H(+) = 1-deoxy-D-xylulose 5-phosphate + CO2</text>
        <dbReference type="Rhea" id="RHEA:12605"/>
        <dbReference type="ChEBI" id="CHEBI:15361"/>
        <dbReference type="ChEBI" id="CHEBI:15378"/>
        <dbReference type="ChEBI" id="CHEBI:16526"/>
        <dbReference type="ChEBI" id="CHEBI:57792"/>
        <dbReference type="ChEBI" id="CHEBI:59776"/>
        <dbReference type="EC" id="2.2.1.7"/>
    </reaction>
</comment>
<comment type="cofactor">
    <cofactor evidence="1">
        <name>Mg(2+)</name>
        <dbReference type="ChEBI" id="CHEBI:18420"/>
    </cofactor>
    <text evidence="1">Binds 1 Mg(2+) ion per subunit.</text>
</comment>
<comment type="cofactor">
    <cofactor evidence="1">
        <name>thiamine diphosphate</name>
        <dbReference type="ChEBI" id="CHEBI:58937"/>
    </cofactor>
    <text evidence="1">Binds 1 thiamine pyrophosphate per subunit.</text>
</comment>
<comment type="pathway">
    <text evidence="1">Metabolic intermediate biosynthesis; 1-deoxy-D-xylulose 5-phosphate biosynthesis; 1-deoxy-D-xylulose 5-phosphate from D-glyceraldehyde 3-phosphate and pyruvate: step 1/1.</text>
</comment>
<comment type="subunit">
    <text evidence="1">Homodimer.</text>
</comment>
<comment type="similarity">
    <text evidence="1">Belongs to the transketolase family. DXPS subfamily.</text>
</comment>
<keyword id="KW-0414">Isoprene biosynthesis</keyword>
<keyword id="KW-0460">Magnesium</keyword>
<keyword id="KW-0479">Metal-binding</keyword>
<keyword id="KW-1185">Reference proteome</keyword>
<keyword id="KW-0784">Thiamine biosynthesis</keyword>
<keyword id="KW-0786">Thiamine pyrophosphate</keyword>
<keyword id="KW-0808">Transferase</keyword>
<accession>Q8R639</accession>